<name>RNPH_XANOP</name>
<feature type="chain" id="PRO_1000129387" description="Ribonuclease PH">
    <location>
        <begin position="1"/>
        <end position="241"/>
    </location>
</feature>
<feature type="binding site" evidence="1">
    <location>
        <position position="89"/>
    </location>
    <ligand>
        <name>phosphate</name>
        <dbReference type="ChEBI" id="CHEBI:43474"/>
        <note>substrate</note>
    </ligand>
</feature>
<feature type="binding site" evidence="1">
    <location>
        <begin position="127"/>
        <end position="129"/>
    </location>
    <ligand>
        <name>phosphate</name>
        <dbReference type="ChEBI" id="CHEBI:43474"/>
        <note>substrate</note>
    </ligand>
</feature>
<dbReference type="EC" id="2.7.7.56" evidence="1"/>
<dbReference type="EMBL" id="CP000967">
    <property type="protein sequence ID" value="ACD60660.1"/>
    <property type="molecule type" value="Genomic_DNA"/>
</dbReference>
<dbReference type="RefSeq" id="WP_011257981.1">
    <property type="nucleotide sequence ID" value="NC_010717.2"/>
</dbReference>
<dbReference type="SMR" id="B2SLL1"/>
<dbReference type="KEGG" id="xop:PXO_02369"/>
<dbReference type="eggNOG" id="COG0689">
    <property type="taxonomic scope" value="Bacteria"/>
</dbReference>
<dbReference type="HOGENOM" id="CLU_050858_0_0_6"/>
<dbReference type="Proteomes" id="UP000001740">
    <property type="component" value="Chromosome"/>
</dbReference>
<dbReference type="GO" id="GO:0000175">
    <property type="term" value="F:3'-5'-RNA exonuclease activity"/>
    <property type="evidence" value="ECO:0007669"/>
    <property type="project" value="UniProtKB-UniRule"/>
</dbReference>
<dbReference type="GO" id="GO:0000049">
    <property type="term" value="F:tRNA binding"/>
    <property type="evidence" value="ECO:0007669"/>
    <property type="project" value="UniProtKB-UniRule"/>
</dbReference>
<dbReference type="GO" id="GO:0009022">
    <property type="term" value="F:tRNA nucleotidyltransferase activity"/>
    <property type="evidence" value="ECO:0007669"/>
    <property type="project" value="UniProtKB-UniRule"/>
</dbReference>
<dbReference type="GO" id="GO:0016075">
    <property type="term" value="P:rRNA catabolic process"/>
    <property type="evidence" value="ECO:0007669"/>
    <property type="project" value="UniProtKB-UniRule"/>
</dbReference>
<dbReference type="GO" id="GO:0006364">
    <property type="term" value="P:rRNA processing"/>
    <property type="evidence" value="ECO:0007669"/>
    <property type="project" value="UniProtKB-KW"/>
</dbReference>
<dbReference type="GO" id="GO:0008033">
    <property type="term" value="P:tRNA processing"/>
    <property type="evidence" value="ECO:0007669"/>
    <property type="project" value="UniProtKB-UniRule"/>
</dbReference>
<dbReference type="CDD" id="cd11362">
    <property type="entry name" value="RNase_PH_bact"/>
    <property type="match status" value="1"/>
</dbReference>
<dbReference type="FunFam" id="3.30.230.70:FF:000003">
    <property type="entry name" value="Ribonuclease PH"/>
    <property type="match status" value="1"/>
</dbReference>
<dbReference type="Gene3D" id="3.30.230.70">
    <property type="entry name" value="GHMP Kinase, N-terminal domain"/>
    <property type="match status" value="1"/>
</dbReference>
<dbReference type="HAMAP" id="MF_00564">
    <property type="entry name" value="RNase_PH"/>
    <property type="match status" value="1"/>
</dbReference>
<dbReference type="InterPro" id="IPR001247">
    <property type="entry name" value="ExoRNase_PH_dom1"/>
</dbReference>
<dbReference type="InterPro" id="IPR015847">
    <property type="entry name" value="ExoRNase_PH_dom2"/>
</dbReference>
<dbReference type="InterPro" id="IPR036345">
    <property type="entry name" value="ExoRNase_PH_dom2_sf"/>
</dbReference>
<dbReference type="InterPro" id="IPR027408">
    <property type="entry name" value="PNPase/RNase_PH_dom_sf"/>
</dbReference>
<dbReference type="InterPro" id="IPR020568">
    <property type="entry name" value="Ribosomal_Su5_D2-typ_SF"/>
</dbReference>
<dbReference type="InterPro" id="IPR050080">
    <property type="entry name" value="RNase_PH"/>
</dbReference>
<dbReference type="InterPro" id="IPR002381">
    <property type="entry name" value="RNase_PH_bac-type"/>
</dbReference>
<dbReference type="InterPro" id="IPR018336">
    <property type="entry name" value="RNase_PH_CS"/>
</dbReference>
<dbReference type="NCBIfam" id="TIGR01966">
    <property type="entry name" value="RNasePH"/>
    <property type="match status" value="1"/>
</dbReference>
<dbReference type="PANTHER" id="PTHR11953">
    <property type="entry name" value="EXOSOME COMPLEX COMPONENT"/>
    <property type="match status" value="1"/>
</dbReference>
<dbReference type="PANTHER" id="PTHR11953:SF0">
    <property type="entry name" value="EXOSOME COMPLEX COMPONENT RRP41"/>
    <property type="match status" value="1"/>
</dbReference>
<dbReference type="Pfam" id="PF01138">
    <property type="entry name" value="RNase_PH"/>
    <property type="match status" value="1"/>
</dbReference>
<dbReference type="Pfam" id="PF03725">
    <property type="entry name" value="RNase_PH_C"/>
    <property type="match status" value="1"/>
</dbReference>
<dbReference type="SUPFAM" id="SSF55666">
    <property type="entry name" value="Ribonuclease PH domain 2-like"/>
    <property type="match status" value="1"/>
</dbReference>
<dbReference type="SUPFAM" id="SSF54211">
    <property type="entry name" value="Ribosomal protein S5 domain 2-like"/>
    <property type="match status" value="1"/>
</dbReference>
<dbReference type="PROSITE" id="PS01277">
    <property type="entry name" value="RIBONUCLEASE_PH"/>
    <property type="match status" value="1"/>
</dbReference>
<protein>
    <recommendedName>
        <fullName evidence="1">Ribonuclease PH</fullName>
        <shortName evidence="1">RNase PH</shortName>
        <ecNumber evidence="1">2.7.7.56</ecNumber>
    </recommendedName>
    <alternativeName>
        <fullName evidence="1">tRNA nucleotidyltransferase</fullName>
    </alternativeName>
</protein>
<comment type="function">
    <text evidence="1">Phosphorolytic 3'-5' exoribonuclease that plays an important role in tRNA 3'-end maturation. Removes nucleotide residues following the 3'-CCA terminus of tRNAs; can also add nucleotides to the ends of RNA molecules by using nucleoside diphosphates as substrates, but this may not be physiologically important. Probably plays a role in initiation of 16S rRNA degradation (leading to ribosome degradation) during starvation.</text>
</comment>
<comment type="catalytic activity">
    <reaction evidence="1">
        <text>tRNA(n+1) + phosphate = tRNA(n) + a ribonucleoside 5'-diphosphate</text>
        <dbReference type="Rhea" id="RHEA:10628"/>
        <dbReference type="Rhea" id="RHEA-COMP:17343"/>
        <dbReference type="Rhea" id="RHEA-COMP:17344"/>
        <dbReference type="ChEBI" id="CHEBI:43474"/>
        <dbReference type="ChEBI" id="CHEBI:57930"/>
        <dbReference type="ChEBI" id="CHEBI:173114"/>
        <dbReference type="EC" id="2.7.7.56"/>
    </reaction>
</comment>
<comment type="subunit">
    <text evidence="1">Homohexameric ring arranged as a trimer of dimers.</text>
</comment>
<comment type="similarity">
    <text evidence="1">Belongs to the RNase PH family.</text>
</comment>
<gene>
    <name evidence="1" type="primary">rph</name>
    <name type="ordered locus">PXO_02369</name>
</gene>
<reference key="1">
    <citation type="journal article" date="2008" name="BMC Genomics">
        <title>Genome sequence and rapid evolution of the rice pathogen Xanthomonas oryzae pv. oryzae PXO99A.</title>
        <authorList>
            <person name="Salzberg S.L."/>
            <person name="Sommer D.D."/>
            <person name="Schatz M.C."/>
            <person name="Phillippy A.M."/>
            <person name="Rabinowicz P.D."/>
            <person name="Tsuge S."/>
            <person name="Furutani A."/>
            <person name="Ochiai H."/>
            <person name="Delcher A.L."/>
            <person name="Kelley D."/>
            <person name="Madupu R."/>
            <person name="Puiu D."/>
            <person name="Radune D."/>
            <person name="Shumway M."/>
            <person name="Trapnell C."/>
            <person name="Aparna G."/>
            <person name="Jha G."/>
            <person name="Pandey A."/>
            <person name="Patil P.B."/>
            <person name="Ishihara H."/>
            <person name="Meyer D.F."/>
            <person name="Szurek B."/>
            <person name="Verdier V."/>
            <person name="Koebnik R."/>
            <person name="Dow J.M."/>
            <person name="Ryan R.P."/>
            <person name="Hirata H."/>
            <person name="Tsuyumu S."/>
            <person name="Won Lee S."/>
            <person name="Seo Y.-S."/>
            <person name="Sriariyanum M."/>
            <person name="Ronald P.C."/>
            <person name="Sonti R.V."/>
            <person name="Van Sluys M.-A."/>
            <person name="Leach J.E."/>
            <person name="White F.F."/>
            <person name="Bogdanove A.J."/>
        </authorList>
    </citation>
    <scope>NUCLEOTIDE SEQUENCE [LARGE SCALE GENOMIC DNA]</scope>
    <source>
        <strain>PXO99A</strain>
    </source>
</reference>
<keyword id="KW-0548">Nucleotidyltransferase</keyword>
<keyword id="KW-0694">RNA-binding</keyword>
<keyword id="KW-0698">rRNA processing</keyword>
<keyword id="KW-0808">Transferase</keyword>
<keyword id="KW-0819">tRNA processing</keyword>
<keyword id="KW-0820">tRNA-binding</keyword>
<sequence>MTFSRPSGRTADQLRPVRIERAFTRHAEGSVLVSFGDTHVLCTASVENRVPNFLRGKGEGWVTAEYGMLPRSTHTRSDREAARGKQGGRTLEIQRLIGRALRACVDRNALGERTITLDCDVLQADGGTRTAAITGAYVALADAVNLLLKRGEIKKHPLIGAVAAVSVGIYRGEPVLDLDYPEDSDCDTDMNVVMNDGGGFIELQGTAEGHAFRRDELNALLALAEKGMGDLFALQRAALAG</sequence>
<evidence type="ECO:0000255" key="1">
    <source>
        <dbReference type="HAMAP-Rule" id="MF_00564"/>
    </source>
</evidence>
<organism>
    <name type="scientific">Xanthomonas oryzae pv. oryzae (strain PXO99A)</name>
    <dbReference type="NCBI Taxonomy" id="360094"/>
    <lineage>
        <taxon>Bacteria</taxon>
        <taxon>Pseudomonadati</taxon>
        <taxon>Pseudomonadota</taxon>
        <taxon>Gammaproteobacteria</taxon>
        <taxon>Lysobacterales</taxon>
        <taxon>Lysobacteraceae</taxon>
        <taxon>Xanthomonas</taxon>
    </lineage>
</organism>
<accession>B2SLL1</accession>
<proteinExistence type="inferred from homology"/>